<evidence type="ECO:0000255" key="1">
    <source>
        <dbReference type="HAMAP-Rule" id="MF_01390"/>
    </source>
</evidence>
<protein>
    <recommendedName>
        <fullName evidence="1">Maturase K</fullName>
    </recommendedName>
    <alternativeName>
        <fullName evidence="1">Intron maturase</fullName>
    </alternativeName>
</protein>
<comment type="function">
    <text evidence="1">Usually encoded in the trnK tRNA gene intron. Probably assists in splicing its own and other chloroplast group II introns.</text>
</comment>
<comment type="subcellular location">
    <subcellularLocation>
        <location>Plastid</location>
        <location>Chloroplast</location>
    </subcellularLocation>
</comment>
<comment type="similarity">
    <text evidence="1">Belongs to the intron maturase 2 family. MatK subfamily.</text>
</comment>
<geneLocation type="chloroplast"/>
<name>MATK_LIRMU</name>
<dbReference type="EMBL" id="AB029784">
    <property type="protein sequence ID" value="BAA83291.1"/>
    <property type="molecule type" value="Genomic_DNA"/>
</dbReference>
<dbReference type="GO" id="GO:0009507">
    <property type="term" value="C:chloroplast"/>
    <property type="evidence" value="ECO:0007669"/>
    <property type="project" value="UniProtKB-SubCell"/>
</dbReference>
<dbReference type="GO" id="GO:0003723">
    <property type="term" value="F:RNA binding"/>
    <property type="evidence" value="ECO:0007669"/>
    <property type="project" value="UniProtKB-KW"/>
</dbReference>
<dbReference type="GO" id="GO:0006397">
    <property type="term" value="P:mRNA processing"/>
    <property type="evidence" value="ECO:0007669"/>
    <property type="project" value="UniProtKB-KW"/>
</dbReference>
<dbReference type="GO" id="GO:0008380">
    <property type="term" value="P:RNA splicing"/>
    <property type="evidence" value="ECO:0007669"/>
    <property type="project" value="UniProtKB-UniRule"/>
</dbReference>
<dbReference type="GO" id="GO:0008033">
    <property type="term" value="P:tRNA processing"/>
    <property type="evidence" value="ECO:0007669"/>
    <property type="project" value="UniProtKB-KW"/>
</dbReference>
<dbReference type="HAMAP" id="MF_01390">
    <property type="entry name" value="MatK"/>
    <property type="match status" value="1"/>
</dbReference>
<dbReference type="InterPro" id="IPR024937">
    <property type="entry name" value="Domain_X"/>
</dbReference>
<dbReference type="InterPro" id="IPR002866">
    <property type="entry name" value="Maturase_MatK"/>
</dbReference>
<dbReference type="InterPro" id="IPR024942">
    <property type="entry name" value="Maturase_MatK_N"/>
</dbReference>
<dbReference type="PANTHER" id="PTHR34811">
    <property type="entry name" value="MATURASE K"/>
    <property type="match status" value="1"/>
</dbReference>
<dbReference type="PANTHER" id="PTHR34811:SF1">
    <property type="entry name" value="MATURASE K"/>
    <property type="match status" value="1"/>
</dbReference>
<dbReference type="Pfam" id="PF01348">
    <property type="entry name" value="Intron_maturas2"/>
    <property type="match status" value="1"/>
</dbReference>
<dbReference type="Pfam" id="PF01824">
    <property type="entry name" value="MatK_N"/>
    <property type="match status" value="1"/>
</dbReference>
<organism>
    <name type="scientific">Liriope muscari</name>
    <name type="common">Big blue lilyturf</name>
    <name type="synonym">Liriope platyphylla</name>
    <dbReference type="NCBI Taxonomy" id="39529"/>
    <lineage>
        <taxon>Eukaryota</taxon>
        <taxon>Viridiplantae</taxon>
        <taxon>Streptophyta</taxon>
        <taxon>Embryophyta</taxon>
        <taxon>Tracheophyta</taxon>
        <taxon>Spermatophyta</taxon>
        <taxon>Magnoliopsida</taxon>
        <taxon>Liliopsida</taxon>
        <taxon>Asparagales</taxon>
        <taxon>Asparagaceae</taxon>
        <taxon>Nolinoideae</taxon>
        <taxon>Liriope</taxon>
    </lineage>
</organism>
<keyword id="KW-0150">Chloroplast</keyword>
<keyword id="KW-0507">mRNA processing</keyword>
<keyword id="KW-0934">Plastid</keyword>
<keyword id="KW-0694">RNA-binding</keyword>
<keyword id="KW-0819">tRNA processing</keyword>
<proteinExistence type="inferred from homology"/>
<gene>
    <name evidence="1" type="primary">matK</name>
</gene>
<reference key="1">
    <citation type="book" date="2000" name="Monocots: systematics and evolution">
        <title>Molecular phylogeny of the Convallariaceae (Asparagales).</title>
        <editorList>
            <person name="Wilson K.L."/>
            <person name="Morrison D.A."/>
        </editorList>
        <authorList>
            <person name="Yamashita J."/>
            <person name="Tamura M.N."/>
        </authorList>
    </citation>
    <scope>NUCLEOTIDE SEQUENCE [GENOMIC DNA]</scope>
</reference>
<sequence length="520" mass="62402">MEELQGYLEKDGSRQQHFLYPLLFQEYIYALAHNHGLNGSIFYEPVEVFGYDNKSSLVLVKRLITRIYQQNFLISLVNDSNQNRFVGYNHNNFFFSHFHSQMISESFAIIVEIPFSLRLVSYFEEKEIPKYHNLRSIHSIFTFLEDKLSHLNYVSDILIPHPIHMEILVQILQCWIQDVPFLHLLRFFLHEYHNLNSLLITQKKSIYVFSKENKRLFRFLYNSYVFEWEFLFVFIRKQSSYLRLTSSGTFLGRTHFYEKIEHLQIKHFVVVCRNYFHRTLWFCKDPFMHYVRYQGKAILASKGTHLLMKKWKYHFFNFWQYYFHVWTQPYRIHINQLSNYSFYFLGYLSSLLLNFSAVRNQMLENSFLIDTITKKFDTXVPVIFLIGSLAKAKFCTVSGHPISEPIWTDLSDSDILDRFGRICRNLSHYHSGSSKKQGLYRIKYILRLSCARTLARKHKSTVRTFLRRLGSGLLEEFFTEEEQVLSLIFPKTTPFILHGSHRERIWYLDIIRINDLVNHS</sequence>
<feature type="chain" id="PRO_0000143488" description="Maturase K">
    <location>
        <begin position="1"/>
        <end position="520"/>
    </location>
</feature>
<accession>Q9TNA1</accession>